<feature type="chain" id="PRO_0000064552" description="Mannuronan synthase">
    <location>
        <begin position="1"/>
        <end position="389"/>
    </location>
</feature>
<feature type="domain" description="PilZ">
    <location>
        <begin position="16"/>
        <end position="116"/>
    </location>
</feature>
<feature type="sequence conflict" description="In Ref. 1; AAC36876." evidence="3" ref="1">
    <original>G</original>
    <variation>S</variation>
    <location>
        <position position="172"/>
    </location>
</feature>
<feature type="sequence conflict" description="In Ref. 1; AAC36876." evidence="3" ref="1">
    <original>G</original>
    <variation>A</variation>
    <location>
        <position position="363"/>
    </location>
</feature>
<feature type="sequence conflict" description="In Ref. 1; AAC36876." evidence="3" ref="1">
    <original>G</original>
    <variation>A</variation>
    <location>
        <position position="372"/>
    </location>
</feature>
<feature type="strand" evidence="5">
    <location>
        <begin position="25"/>
        <end position="31"/>
    </location>
</feature>
<feature type="strand" evidence="5">
    <location>
        <begin position="37"/>
        <end position="41"/>
    </location>
</feature>
<feature type="strand" evidence="5">
    <location>
        <begin position="43"/>
        <end position="45"/>
    </location>
</feature>
<feature type="strand" evidence="5">
    <location>
        <begin position="47"/>
        <end position="53"/>
    </location>
</feature>
<feature type="strand" evidence="5">
    <location>
        <begin position="64"/>
        <end position="73"/>
    </location>
</feature>
<feature type="strand" evidence="5">
    <location>
        <begin position="76"/>
        <end position="89"/>
    </location>
</feature>
<feature type="turn" evidence="5">
    <location>
        <begin position="91"/>
        <end position="93"/>
    </location>
</feature>
<feature type="strand" evidence="5">
    <location>
        <begin position="95"/>
        <end position="102"/>
    </location>
</feature>
<feature type="helix" evidence="5">
    <location>
        <begin position="105"/>
        <end position="121"/>
    </location>
</feature>
<name>ALG44_PSEAE</name>
<gene>
    <name type="primary">alg44</name>
    <name type="ordered locus">PA3542</name>
</gene>
<proteinExistence type="evidence at protein level"/>
<sequence length="389" mass="41787">MNTAVNVNVVHESEAQRQFARVKLPARIRYIGANREGVDARLLDLSAGGFAFTASGAPIQPGDLYKGKLLFQVDSISFSLEVEFQVRSVDPASRRVGCEFQNLKPREVAALRYLITSYLAGEVIGVGDMLNTLQRENFTKARKQGGGNGGMGFFGRVRAVTLSTAIFVVGVGAFAFILNQMYNLYFVTHADSGVVSVPNQQITMPREGTVQSLLGPNAEVAKGAPIATFSANLLDMLKGNLTEEQLNPGNIEKLFGHQMKGTLTSPCDCRVVQQLVADGQYANKGQVIFTLAPRDSVASIEARFPYRNAAELAPGTRVNFQVAGDGVNRSGRIVNTAPVDGDLSSEIRVQIQPDQPLDAQYAGRPAEVSIGGLPGRTLLNKAVTLATAR</sequence>
<keyword id="KW-0002">3D-structure</keyword>
<keyword id="KW-0016">Alginate biosynthesis</keyword>
<keyword id="KW-0328">Glycosyltransferase</keyword>
<keyword id="KW-0574">Periplasm</keyword>
<keyword id="KW-1185">Reference proteome</keyword>
<keyword id="KW-0808">Transferase</keyword>
<reference key="1">
    <citation type="journal article" date="1993" name="Gene">
        <title>Sequence of the alg8 and alg44 genes involved in the synthesis of alginate by Pseudomonas aeruginosa.</title>
        <authorList>
            <person name="Maharaj R."/>
            <person name="May T.B."/>
            <person name="Wang S.-K."/>
            <person name="Chakrabarty A.M."/>
        </authorList>
    </citation>
    <scope>NUCLEOTIDE SEQUENCE [GENOMIC DNA]</scope>
    <source>
        <strain>8830</strain>
    </source>
</reference>
<reference key="2">
    <citation type="journal article" date="2000" name="Nature">
        <title>Complete genome sequence of Pseudomonas aeruginosa PAO1, an opportunistic pathogen.</title>
        <authorList>
            <person name="Stover C.K."/>
            <person name="Pham X.-Q.T."/>
            <person name="Erwin A.L."/>
            <person name="Mizoguchi S.D."/>
            <person name="Warrener P."/>
            <person name="Hickey M.J."/>
            <person name="Brinkman F.S.L."/>
            <person name="Hufnagle W.O."/>
            <person name="Kowalik D.J."/>
            <person name="Lagrou M."/>
            <person name="Garber R.L."/>
            <person name="Goltry L."/>
            <person name="Tolentino E."/>
            <person name="Westbrock-Wadman S."/>
            <person name="Yuan Y."/>
            <person name="Brody L.L."/>
            <person name="Coulter S.N."/>
            <person name="Folger K.R."/>
            <person name="Kas A."/>
            <person name="Larbig K."/>
            <person name="Lim R.M."/>
            <person name="Smith K.A."/>
            <person name="Spencer D.H."/>
            <person name="Wong G.K.-S."/>
            <person name="Wu Z."/>
            <person name="Paulsen I.T."/>
            <person name="Reizer J."/>
            <person name="Saier M.H. Jr."/>
            <person name="Hancock R.E.W."/>
            <person name="Lory S."/>
            <person name="Olson M.V."/>
        </authorList>
    </citation>
    <scope>NUCLEOTIDE SEQUENCE [LARGE SCALE GENOMIC DNA]</scope>
    <source>
        <strain>ATCC 15692 / DSM 22644 / CIP 104116 / JCM 14847 / LMG 12228 / 1C / PRS 101 / PAO1</strain>
    </source>
</reference>
<reference key="3">
    <citation type="submission" date="2005-01" db="EMBL/GenBank/DDBJ databases">
        <authorList>
            <person name="Muhammadi A.N."/>
        </authorList>
    </citation>
    <scope>NUCLEOTIDE SEQUENCE [GENOMIC DNA] OF 11-282</scope>
</reference>
<reference key="4">
    <citation type="journal article" date="2006" name="FEBS Lett.">
        <title>Alg44, a unique protein required for alginate biosynthesis in Pseudomonas aeruginosa.</title>
        <authorList>
            <person name="Remminghorst U."/>
            <person name="Rehm B.H.A."/>
        </authorList>
    </citation>
    <scope>ROLE IN ALGINATE PRODUCTION</scope>
    <scope>SUBCELLULAR LOCATION</scope>
    <scope>IDENTIFICATION BY MASS SPECTROMETRY</scope>
    <source>
        <strain>FRD1</strain>
    </source>
</reference>
<reference key="5">
    <citation type="journal article" date="2008" name="Microbiology">
        <title>Membrane topology and roles of Pseudomonas aeruginosa Alg8 and Alg44 in alginate polymerization.</title>
        <authorList>
            <person name="Oglesby L.L."/>
            <person name="Jain S."/>
            <person name="Ohman D.E."/>
        </authorList>
    </citation>
    <scope>FUNCTION</scope>
    <scope>CATALYTIC ACTIVITY</scope>
</reference>
<evidence type="ECO:0000269" key="1">
    <source>
    </source>
</evidence>
<evidence type="ECO:0000269" key="2">
    <source>
    </source>
</evidence>
<evidence type="ECO:0000305" key="3"/>
<evidence type="ECO:0000305" key="4">
    <source>
    </source>
</evidence>
<evidence type="ECO:0007829" key="5">
    <source>
        <dbReference type="PDB" id="4RT0"/>
    </source>
</evidence>
<accession>Q9HY69</accession>
<accession>Q52464</accession>
<accession>Q5EI78</accession>
<comment type="function">
    <text evidence="1 2">Required for alginate biosynthesis.</text>
</comment>
<comment type="catalytic activity">
    <reaction evidence="2">
        <text>[(1-&gt;4)-beta-D-mannuronosyl](n) + GDP-alpha-D-mannuronate = [(1-&gt;4)-beta-D-mannuronosyl](n+1) + GDP + H(+)</text>
        <dbReference type="Rhea" id="RHEA:46876"/>
        <dbReference type="Rhea" id="RHEA-COMP:11270"/>
        <dbReference type="Rhea" id="RHEA-COMP:11686"/>
        <dbReference type="ChEBI" id="CHEBI:15378"/>
        <dbReference type="ChEBI" id="CHEBI:58189"/>
        <dbReference type="ChEBI" id="CHEBI:84886"/>
        <dbReference type="ChEBI" id="CHEBI:85311"/>
        <dbReference type="EC" id="2.4.1.33"/>
    </reaction>
</comment>
<comment type="pathway">
    <text>Glycan biosynthesis; alginate biosynthesis.</text>
</comment>
<comment type="subcellular location">
    <subcellularLocation>
        <location evidence="4">Periplasm</location>
    </subcellularLocation>
</comment>
<comment type="similarity">
    <text evidence="3">Belongs to the Alg44 family.</text>
</comment>
<comment type="sequence caution" evidence="3">
    <conflict type="frameshift">
        <sequence resource="EMBL-CDS" id="AAC36876"/>
    </conflict>
</comment>
<protein>
    <recommendedName>
        <fullName>Mannuronan synthase</fullName>
        <ecNumber evidence="2">2.4.1.33</ecNumber>
    </recommendedName>
    <alternativeName>
        <fullName>Alginate biosynthesis protein Alg44</fullName>
    </alternativeName>
</protein>
<organism>
    <name type="scientific">Pseudomonas aeruginosa (strain ATCC 15692 / DSM 22644 / CIP 104116 / JCM 14847 / LMG 12228 / 1C / PRS 101 / PAO1)</name>
    <dbReference type="NCBI Taxonomy" id="208964"/>
    <lineage>
        <taxon>Bacteria</taxon>
        <taxon>Pseudomonadati</taxon>
        <taxon>Pseudomonadota</taxon>
        <taxon>Gammaproteobacteria</taxon>
        <taxon>Pseudomonadales</taxon>
        <taxon>Pseudomonadaceae</taxon>
        <taxon>Pseudomonas</taxon>
    </lineage>
</organism>
<dbReference type="EC" id="2.4.1.33" evidence="2"/>
<dbReference type="EMBL" id="L22611">
    <property type="protein sequence ID" value="AAC36876.1"/>
    <property type="status" value="ALT_FRAME"/>
    <property type="molecule type" value="Genomic_DNA"/>
</dbReference>
<dbReference type="EMBL" id="AE004091">
    <property type="protein sequence ID" value="AAG06930.1"/>
    <property type="molecule type" value="Genomic_DNA"/>
</dbReference>
<dbReference type="EMBL" id="AY880026">
    <property type="protein sequence ID" value="AAW77927.1"/>
    <property type="molecule type" value="Genomic_DNA"/>
</dbReference>
<dbReference type="PIR" id="C83202">
    <property type="entry name" value="C83202"/>
</dbReference>
<dbReference type="RefSeq" id="NP_252232.1">
    <property type="nucleotide sequence ID" value="NC_002516.2"/>
</dbReference>
<dbReference type="RefSeq" id="WP_003092101.1">
    <property type="nucleotide sequence ID" value="NZ_QZGE01000001.1"/>
</dbReference>
<dbReference type="PDB" id="4RT0">
    <property type="method" value="X-ray"/>
    <property type="resolution" value="1.80 A"/>
    <property type="chains" value="A/B/C=14-122"/>
</dbReference>
<dbReference type="PDB" id="4RT1">
    <property type="method" value="X-ray"/>
    <property type="resolution" value="1.70 A"/>
    <property type="chains" value="A/B/C=14-122"/>
</dbReference>
<dbReference type="PDB" id="4XRN">
    <property type="method" value="X-ray"/>
    <property type="resolution" value="2.00 A"/>
    <property type="chains" value="A/B/C/D=16-122"/>
</dbReference>
<dbReference type="PDBsum" id="4RT0"/>
<dbReference type="PDBsum" id="4RT1"/>
<dbReference type="PDBsum" id="4XRN"/>
<dbReference type="SMR" id="Q9HY69"/>
<dbReference type="STRING" id="208964.PA3542"/>
<dbReference type="PaxDb" id="208964-PA3542"/>
<dbReference type="DNASU" id="878770"/>
<dbReference type="GeneID" id="878770"/>
<dbReference type="KEGG" id="pae:PA3542"/>
<dbReference type="PATRIC" id="fig|208964.12.peg.3706"/>
<dbReference type="PseudoCAP" id="PA3542"/>
<dbReference type="HOGENOM" id="CLU_058768_0_0_6"/>
<dbReference type="InParanoid" id="Q9HY69"/>
<dbReference type="OrthoDB" id="5912905at2"/>
<dbReference type="PhylomeDB" id="Q9HY69"/>
<dbReference type="BioCyc" id="MetaCyc:MONOMER-19192"/>
<dbReference type="BioCyc" id="PAER208964:G1FZ6-3610-MONOMER"/>
<dbReference type="UniPathway" id="UPA00286"/>
<dbReference type="EvolutionaryTrace" id="Q9HY69"/>
<dbReference type="Proteomes" id="UP000002438">
    <property type="component" value="Chromosome"/>
</dbReference>
<dbReference type="GO" id="GO:0009276">
    <property type="term" value="C:Gram-negative-bacterium-type cell wall"/>
    <property type="evidence" value="ECO:0000314"/>
    <property type="project" value="PseudoCAP"/>
</dbReference>
<dbReference type="GO" id="GO:0042597">
    <property type="term" value="C:periplasmic space"/>
    <property type="evidence" value="ECO:0007669"/>
    <property type="project" value="UniProtKB-SubCell"/>
</dbReference>
<dbReference type="GO" id="GO:0005886">
    <property type="term" value="C:plasma membrane"/>
    <property type="evidence" value="ECO:0000318"/>
    <property type="project" value="GO_Central"/>
</dbReference>
<dbReference type="GO" id="GO:0047643">
    <property type="term" value="F:alginate synthase activity"/>
    <property type="evidence" value="ECO:0007669"/>
    <property type="project" value="UniProtKB-EC"/>
</dbReference>
<dbReference type="GO" id="GO:0015125">
    <property type="term" value="F:bile acid transmembrane transporter activity"/>
    <property type="evidence" value="ECO:0000318"/>
    <property type="project" value="GO_Central"/>
</dbReference>
<dbReference type="GO" id="GO:0035438">
    <property type="term" value="F:cyclic-di-GMP binding"/>
    <property type="evidence" value="ECO:0007669"/>
    <property type="project" value="InterPro"/>
</dbReference>
<dbReference type="GO" id="GO:0004467">
    <property type="term" value="F:long-chain fatty acid-CoA ligase activity"/>
    <property type="evidence" value="ECO:0000314"/>
    <property type="project" value="PseudoCAP"/>
</dbReference>
<dbReference type="GO" id="GO:0042121">
    <property type="term" value="P:alginic acid biosynthetic process"/>
    <property type="evidence" value="ECO:0000314"/>
    <property type="project" value="PseudoCAP"/>
</dbReference>
<dbReference type="GO" id="GO:0015721">
    <property type="term" value="P:bile acid and bile salt transport"/>
    <property type="evidence" value="ECO:0000318"/>
    <property type="project" value="GO_Central"/>
</dbReference>
<dbReference type="GO" id="GO:0044010">
    <property type="term" value="P:single-species biofilm formation"/>
    <property type="evidence" value="ECO:0000314"/>
    <property type="project" value="PseudoCAP"/>
</dbReference>
<dbReference type="GO" id="GO:1990961">
    <property type="term" value="P:xenobiotic detoxification by transmembrane export across the plasma membrane"/>
    <property type="evidence" value="ECO:0000318"/>
    <property type="project" value="GO_Central"/>
</dbReference>
<dbReference type="Gene3D" id="2.40.50.100">
    <property type="match status" value="1"/>
</dbReference>
<dbReference type="Gene3D" id="2.40.10.220">
    <property type="entry name" value="predicted glycosyltransferase like domains"/>
    <property type="match status" value="1"/>
</dbReference>
<dbReference type="InterPro" id="IPR050739">
    <property type="entry name" value="MFP"/>
</dbReference>
<dbReference type="InterPro" id="IPR009875">
    <property type="entry name" value="PilZ_domain"/>
</dbReference>
<dbReference type="PANTHER" id="PTHR30386">
    <property type="entry name" value="MEMBRANE FUSION SUBUNIT OF EMRAB-TOLC MULTIDRUG EFFLUX PUMP"/>
    <property type="match status" value="1"/>
</dbReference>
<dbReference type="PANTHER" id="PTHR30386:SF19">
    <property type="entry name" value="MULTIDRUG EXPORT PROTEIN EMRA-RELATED"/>
    <property type="match status" value="1"/>
</dbReference>
<dbReference type="Pfam" id="PF13437">
    <property type="entry name" value="HlyD_3"/>
    <property type="match status" value="1"/>
</dbReference>
<dbReference type="Pfam" id="PF07238">
    <property type="entry name" value="PilZ"/>
    <property type="match status" value="1"/>
</dbReference>
<dbReference type="SUPFAM" id="SSF141371">
    <property type="entry name" value="PilZ domain-like"/>
    <property type="match status" value="1"/>
</dbReference>